<organism>
    <name type="scientific">Methanococcus vannielii</name>
    <dbReference type="NCBI Taxonomy" id="2187"/>
    <lineage>
        <taxon>Archaea</taxon>
        <taxon>Methanobacteriati</taxon>
        <taxon>Methanobacteriota</taxon>
        <taxon>Methanomada group</taxon>
        <taxon>Methanococci</taxon>
        <taxon>Methanococcales</taxon>
        <taxon>Methanococcaceae</taxon>
        <taxon>Methanococcus</taxon>
    </lineage>
</organism>
<gene>
    <name evidence="1" type="primary">rpl30</name>
</gene>
<name>RL30_METVA</name>
<protein>
    <recommendedName>
        <fullName evidence="1">Large ribosomal subunit protein uL30</fullName>
    </recommendedName>
    <alternativeName>
        <fullName evidence="2">50S ribosomal protein L30</fullName>
    </alternativeName>
</protein>
<accession>P14035</accession>
<dbReference type="EMBL" id="X16720">
    <property type="protein sequence ID" value="CAA34701.1"/>
    <property type="molecule type" value="Genomic_DNA"/>
</dbReference>
<dbReference type="PIR" id="S05625">
    <property type="entry name" value="R5MX30"/>
</dbReference>
<dbReference type="SMR" id="P14035"/>
<dbReference type="OMA" id="DYITWGE"/>
<dbReference type="GO" id="GO:0022625">
    <property type="term" value="C:cytosolic large ribosomal subunit"/>
    <property type="evidence" value="ECO:0007669"/>
    <property type="project" value="TreeGrafter"/>
</dbReference>
<dbReference type="GO" id="GO:0003723">
    <property type="term" value="F:RNA binding"/>
    <property type="evidence" value="ECO:0007669"/>
    <property type="project" value="TreeGrafter"/>
</dbReference>
<dbReference type="GO" id="GO:0003735">
    <property type="term" value="F:structural constituent of ribosome"/>
    <property type="evidence" value="ECO:0007669"/>
    <property type="project" value="InterPro"/>
</dbReference>
<dbReference type="GO" id="GO:0000463">
    <property type="term" value="P:maturation of LSU-rRNA from tricistronic rRNA transcript (SSU-rRNA, 5.8S rRNA, LSU-rRNA)"/>
    <property type="evidence" value="ECO:0007669"/>
    <property type="project" value="TreeGrafter"/>
</dbReference>
<dbReference type="GO" id="GO:0006412">
    <property type="term" value="P:translation"/>
    <property type="evidence" value="ECO:0007669"/>
    <property type="project" value="UniProtKB-UniRule"/>
</dbReference>
<dbReference type="CDD" id="cd01657">
    <property type="entry name" value="Ribosomal_L7_archeal_euk"/>
    <property type="match status" value="1"/>
</dbReference>
<dbReference type="Gene3D" id="1.10.15.30">
    <property type="match status" value="1"/>
</dbReference>
<dbReference type="Gene3D" id="3.30.1390.20">
    <property type="entry name" value="Ribosomal protein L30, ferredoxin-like fold domain"/>
    <property type="match status" value="1"/>
</dbReference>
<dbReference type="HAMAP" id="MF_01371_A">
    <property type="entry name" value="Ribosomal_uL30_A"/>
    <property type="match status" value="1"/>
</dbReference>
<dbReference type="InterPro" id="IPR036919">
    <property type="entry name" value="Ribo_uL30_ferredoxin-like_sf"/>
</dbReference>
<dbReference type="InterPro" id="IPR039699">
    <property type="entry name" value="Ribosomal_uL30"/>
</dbReference>
<dbReference type="InterPro" id="IPR005997">
    <property type="entry name" value="Ribosomal_uL30_arc"/>
</dbReference>
<dbReference type="InterPro" id="IPR018038">
    <property type="entry name" value="Ribosomal_uL30_CS"/>
</dbReference>
<dbReference type="InterPro" id="IPR035808">
    <property type="entry name" value="Ribosomal_uL30_euk_arc"/>
</dbReference>
<dbReference type="InterPro" id="IPR016082">
    <property type="entry name" value="Ribosomal_uL30_ferredoxin-like"/>
</dbReference>
<dbReference type="NCBIfam" id="NF004711">
    <property type="entry name" value="PRK06049.1"/>
    <property type="match status" value="1"/>
</dbReference>
<dbReference type="NCBIfam" id="TIGR01309">
    <property type="entry name" value="uL30_arch"/>
    <property type="match status" value="1"/>
</dbReference>
<dbReference type="PANTHER" id="PTHR11524">
    <property type="entry name" value="60S RIBOSOMAL PROTEIN L7"/>
    <property type="match status" value="1"/>
</dbReference>
<dbReference type="PANTHER" id="PTHR11524:SF16">
    <property type="entry name" value="LARGE RIBOSOMAL SUBUNIT PROTEIN UL30"/>
    <property type="match status" value="1"/>
</dbReference>
<dbReference type="Pfam" id="PF00327">
    <property type="entry name" value="Ribosomal_L30"/>
    <property type="match status" value="1"/>
</dbReference>
<dbReference type="SUPFAM" id="SSF55129">
    <property type="entry name" value="Ribosomal protein L30p/L7e"/>
    <property type="match status" value="1"/>
</dbReference>
<dbReference type="PROSITE" id="PS00634">
    <property type="entry name" value="RIBOSOMAL_L30"/>
    <property type="match status" value="1"/>
</dbReference>
<keyword id="KW-0687">Ribonucleoprotein</keyword>
<keyword id="KW-0689">Ribosomal protein</keyword>
<reference key="1">
    <citation type="journal article" date="1989" name="J. Mol. Biol.">
        <title>Organization and structure of the Methanococcus transcriptional unit homologous to the Escherichia coli 'spectinomycin operon'. Implications for the evolutionary relationship of 70 S and 80 S ribosomes.</title>
        <authorList>
            <person name="Auer J."/>
            <person name="Spicker G."/>
            <person name="Boeck A."/>
        </authorList>
    </citation>
    <scope>NUCLEOTIDE SEQUENCE [GENOMIC DNA]</scope>
</reference>
<feature type="chain" id="PRO_0000104625" description="Large ribosomal subunit protein uL30">
    <location>
        <begin position="1"/>
        <end position="154"/>
    </location>
</feature>
<sequence>MAYAVVRVRGSVGVRGDIADTMKMLRLHRVNHCVVIPENDHYTGMIKKVKDYVTYGEIDKETLVSLILKRGRLAGNKRLSEELLKELVELPVDALAEKVLAGEIKLKDTPIKPVFRLHPPRRGYDRGGIKKGFSIGGALGYRAGKINDLLNKMM</sequence>
<evidence type="ECO:0000255" key="1">
    <source>
        <dbReference type="HAMAP-Rule" id="MF_01371"/>
    </source>
</evidence>
<evidence type="ECO:0000305" key="2"/>
<proteinExistence type="inferred from homology"/>
<comment type="subunit">
    <text evidence="1">Part of the 50S ribosomal subunit.</text>
</comment>
<comment type="similarity">
    <text evidence="1">Belongs to the universal ribosomal protein uL30 family.</text>
</comment>